<proteinExistence type="inferred from homology"/>
<reference key="1">
    <citation type="journal article" date="2008" name="Infect. Immun.">
        <title>Genomic comparison of virulent Rickettsia rickettsii Sheila Smith and avirulent Rickettsia rickettsii Iowa.</title>
        <authorList>
            <person name="Ellison D.W."/>
            <person name="Clark T.R."/>
            <person name="Sturdevant D.E."/>
            <person name="Virtaneva K."/>
            <person name="Porcella S.F."/>
            <person name="Hackstadt T."/>
        </authorList>
    </citation>
    <scope>NUCLEOTIDE SEQUENCE [LARGE SCALE GENOMIC DNA]</scope>
    <source>
        <strain>Iowa</strain>
    </source>
</reference>
<gene>
    <name evidence="1" type="primary">yidC</name>
    <name type="ordered locus">RrIowa_0098</name>
</gene>
<comment type="function">
    <text evidence="1">Required for the insertion and/or proper folding and/or complex formation of integral membrane proteins into the membrane. Involved in integration of membrane proteins that insert both dependently and independently of the Sec translocase complex, as well as at least some lipoproteins. Aids folding of multispanning membrane proteins.</text>
</comment>
<comment type="subunit">
    <text evidence="1">Interacts with the Sec translocase complex via SecD. Specifically interacts with transmembrane segments of nascent integral membrane proteins during membrane integration.</text>
</comment>
<comment type="subcellular location">
    <subcellularLocation>
        <location evidence="1">Cell inner membrane</location>
        <topology evidence="1">Multi-pass membrane protein</topology>
    </subcellularLocation>
</comment>
<comment type="similarity">
    <text evidence="1">Belongs to the OXA1/ALB3/YidC family. Type 1 subfamily.</text>
</comment>
<organism>
    <name type="scientific">Rickettsia rickettsii (strain Iowa)</name>
    <dbReference type="NCBI Taxonomy" id="452659"/>
    <lineage>
        <taxon>Bacteria</taxon>
        <taxon>Pseudomonadati</taxon>
        <taxon>Pseudomonadota</taxon>
        <taxon>Alphaproteobacteria</taxon>
        <taxon>Rickettsiales</taxon>
        <taxon>Rickettsiaceae</taxon>
        <taxon>Rickettsieae</taxon>
        <taxon>Rickettsia</taxon>
        <taxon>spotted fever group</taxon>
    </lineage>
</organism>
<sequence>MNNNIINLIAAIILSLSIIFGWQYFVVKPEQKKQQQQIAVQKAENLKKQQLKALVEPATGIVVQEESQVQRIKIESESLTGSISLKGLRFDDLILKKYKQDLSKNSSEVRLFSPANTENAYFAEVGLVSNLSSVKLPNNDTIWNSDSEILSPEKPVHLFWVNEDGVKFLVTITVDENYLFTIEQTIVNNSDKELPVQSYGLINRKYIAVEKAVNILHQGPIGCIDENLKEYSYDDIKDKKSEKFAASKVDWIGITDKYWLSSLIPDKSSNYSSNFNYALKQGIERYQVDFISPVQIIKPGKNFSIKSRIFAGAKKVDLLDKYEKQYDIKLFDRAIDFGWFYIITKPVFYAMNFFYGYVGNFGVSILIVTVIIKLLMFTLANKSYRSMKKMKNLQPEIDRIKNLYSDDKARLNQEIMALYKKEKVNPVAGCLPILVQIPVFFSIYKVLYVTIEMRQAPFYGWIKDLSAPDPTTIFNLFGLLPFAPPSFLMIGAWPILMAITMFLQQKMSPEPADPMQAQVMKFMPLIFLFMFSSFPVGLLIYWSWNNILSIIQQYYINKFN</sequence>
<feature type="chain" id="PRO_1000088260" description="Membrane protein insertase YidC">
    <location>
        <begin position="1"/>
        <end position="560"/>
    </location>
</feature>
<feature type="transmembrane region" description="Helical" evidence="1">
    <location>
        <begin position="5"/>
        <end position="25"/>
    </location>
</feature>
<feature type="transmembrane region" description="Helical" evidence="1">
    <location>
        <begin position="334"/>
        <end position="354"/>
    </location>
</feature>
<feature type="transmembrane region" description="Helical" evidence="1">
    <location>
        <begin position="357"/>
        <end position="377"/>
    </location>
</feature>
<feature type="transmembrane region" description="Helical" evidence="1">
    <location>
        <begin position="431"/>
        <end position="451"/>
    </location>
</feature>
<feature type="transmembrane region" description="Helical" evidence="1">
    <location>
        <begin position="476"/>
        <end position="496"/>
    </location>
</feature>
<feature type="transmembrane region" description="Helical" evidence="1">
    <location>
        <begin position="522"/>
        <end position="542"/>
    </location>
</feature>
<keyword id="KW-0997">Cell inner membrane</keyword>
<keyword id="KW-1003">Cell membrane</keyword>
<keyword id="KW-0143">Chaperone</keyword>
<keyword id="KW-0472">Membrane</keyword>
<keyword id="KW-0653">Protein transport</keyword>
<keyword id="KW-0812">Transmembrane</keyword>
<keyword id="KW-1133">Transmembrane helix</keyword>
<keyword id="KW-0813">Transport</keyword>
<dbReference type="EMBL" id="CP000766">
    <property type="protein sequence ID" value="ABY72020.1"/>
    <property type="molecule type" value="Genomic_DNA"/>
</dbReference>
<dbReference type="RefSeq" id="WP_012262195.1">
    <property type="nucleotide sequence ID" value="NC_010263.3"/>
</dbReference>
<dbReference type="SMR" id="B0BVZ4"/>
<dbReference type="KEGG" id="rrj:RrIowa_0098"/>
<dbReference type="eggNOG" id="COG0706">
    <property type="taxonomic scope" value="Bacteria"/>
</dbReference>
<dbReference type="HOGENOM" id="CLU_016535_1_0_5"/>
<dbReference type="Proteomes" id="UP000000796">
    <property type="component" value="Chromosome"/>
</dbReference>
<dbReference type="GO" id="GO:0005886">
    <property type="term" value="C:plasma membrane"/>
    <property type="evidence" value="ECO:0007669"/>
    <property type="project" value="UniProtKB-SubCell"/>
</dbReference>
<dbReference type="GO" id="GO:0032977">
    <property type="term" value="F:membrane insertase activity"/>
    <property type="evidence" value="ECO:0007669"/>
    <property type="project" value="InterPro"/>
</dbReference>
<dbReference type="GO" id="GO:0051205">
    <property type="term" value="P:protein insertion into membrane"/>
    <property type="evidence" value="ECO:0007669"/>
    <property type="project" value="TreeGrafter"/>
</dbReference>
<dbReference type="GO" id="GO:0015031">
    <property type="term" value="P:protein transport"/>
    <property type="evidence" value="ECO:0007669"/>
    <property type="project" value="UniProtKB-KW"/>
</dbReference>
<dbReference type="CDD" id="cd20070">
    <property type="entry name" value="5TM_YidC_Alb3"/>
    <property type="match status" value="1"/>
</dbReference>
<dbReference type="CDD" id="cd19961">
    <property type="entry name" value="EcYidC-like_peri"/>
    <property type="match status" value="1"/>
</dbReference>
<dbReference type="Gene3D" id="2.70.98.90">
    <property type="match status" value="1"/>
</dbReference>
<dbReference type="HAMAP" id="MF_01810">
    <property type="entry name" value="YidC_type1"/>
    <property type="match status" value="1"/>
</dbReference>
<dbReference type="InterPro" id="IPR019998">
    <property type="entry name" value="Membr_insert_YidC"/>
</dbReference>
<dbReference type="InterPro" id="IPR028053">
    <property type="entry name" value="Membr_insert_YidC_N"/>
</dbReference>
<dbReference type="InterPro" id="IPR001708">
    <property type="entry name" value="YidC/ALB3/OXA1/COX18"/>
</dbReference>
<dbReference type="InterPro" id="IPR028055">
    <property type="entry name" value="YidC/Oxa/ALB_C"/>
</dbReference>
<dbReference type="InterPro" id="IPR047196">
    <property type="entry name" value="YidC_ALB_C"/>
</dbReference>
<dbReference type="InterPro" id="IPR038221">
    <property type="entry name" value="YidC_periplasmic_sf"/>
</dbReference>
<dbReference type="NCBIfam" id="NF002353">
    <property type="entry name" value="PRK01318.1-4"/>
    <property type="match status" value="1"/>
</dbReference>
<dbReference type="NCBIfam" id="TIGR03593">
    <property type="entry name" value="yidC_nterm"/>
    <property type="match status" value="1"/>
</dbReference>
<dbReference type="NCBIfam" id="TIGR03592">
    <property type="entry name" value="yidC_oxa1_cterm"/>
    <property type="match status" value="1"/>
</dbReference>
<dbReference type="PANTHER" id="PTHR12428:SF65">
    <property type="entry name" value="CYTOCHROME C OXIDASE ASSEMBLY PROTEIN COX18, MITOCHONDRIAL"/>
    <property type="match status" value="1"/>
</dbReference>
<dbReference type="PANTHER" id="PTHR12428">
    <property type="entry name" value="OXA1"/>
    <property type="match status" value="1"/>
</dbReference>
<dbReference type="Pfam" id="PF02096">
    <property type="entry name" value="60KD_IMP"/>
    <property type="match status" value="1"/>
</dbReference>
<dbReference type="Pfam" id="PF14849">
    <property type="entry name" value="YidC_periplas"/>
    <property type="match status" value="1"/>
</dbReference>
<dbReference type="PRINTS" id="PR00701">
    <property type="entry name" value="60KDINNERMP"/>
</dbReference>
<dbReference type="PRINTS" id="PR01900">
    <property type="entry name" value="YIDCPROTEIN"/>
</dbReference>
<protein>
    <recommendedName>
        <fullName evidence="1">Membrane protein insertase YidC</fullName>
    </recommendedName>
    <alternativeName>
        <fullName evidence="1">Foldase YidC</fullName>
    </alternativeName>
    <alternativeName>
        <fullName evidence="1">Membrane integrase YidC</fullName>
    </alternativeName>
    <alternativeName>
        <fullName evidence="1">Membrane protein YidC</fullName>
    </alternativeName>
</protein>
<name>YIDC_RICRO</name>
<accession>B0BVZ4</accession>
<evidence type="ECO:0000255" key="1">
    <source>
        <dbReference type="HAMAP-Rule" id="MF_01810"/>
    </source>
</evidence>